<protein>
    <recommendedName>
        <fullName evidence="1">NADH-quinone oxidoreductase subunit C/D</fullName>
        <ecNumber evidence="1">7.1.1.-</ecNumber>
    </recommendedName>
    <alternativeName>
        <fullName evidence="1">NADH dehydrogenase I subunit C/D</fullName>
    </alternativeName>
    <alternativeName>
        <fullName evidence="1">NDH-1 subunit C/D</fullName>
    </alternativeName>
</protein>
<accession>B8D8V7</accession>
<evidence type="ECO:0000255" key="1">
    <source>
        <dbReference type="HAMAP-Rule" id="MF_01359"/>
    </source>
</evidence>
<comment type="function">
    <text evidence="1">NDH-1 shuttles electrons from NADH, via FMN and iron-sulfur (Fe-S) centers, to quinones in the respiratory chain. The immediate electron acceptor for the enzyme in this species is believed to be ubiquinone. Couples the redox reaction to proton translocation (for every two electrons transferred, four hydrogen ions are translocated across the cytoplasmic membrane), and thus conserves the redox energy in a proton gradient.</text>
</comment>
<comment type="catalytic activity">
    <reaction evidence="1">
        <text>a quinone + NADH + 5 H(+)(in) = a quinol + NAD(+) + 4 H(+)(out)</text>
        <dbReference type="Rhea" id="RHEA:57888"/>
        <dbReference type="ChEBI" id="CHEBI:15378"/>
        <dbReference type="ChEBI" id="CHEBI:24646"/>
        <dbReference type="ChEBI" id="CHEBI:57540"/>
        <dbReference type="ChEBI" id="CHEBI:57945"/>
        <dbReference type="ChEBI" id="CHEBI:132124"/>
    </reaction>
</comment>
<comment type="subunit">
    <text evidence="1">NDH-1 is composed of 13 different subunits. Subunits NuoB, CD, E, F, and G constitute the peripheral sector of the complex.</text>
</comment>
<comment type="subcellular location">
    <subcellularLocation>
        <location evidence="1">Cell membrane</location>
        <topology evidence="1">Peripheral membrane protein</topology>
        <orientation evidence="1">Cytoplasmic side</orientation>
    </subcellularLocation>
</comment>
<comment type="similarity">
    <text evidence="1">In the N-terminal section; belongs to the complex I 30 kDa subunit family.</text>
</comment>
<comment type="similarity">
    <text evidence="1">In the C-terminal section; belongs to the complex I 49 kDa subunit family.</text>
</comment>
<reference key="1">
    <citation type="journal article" date="2009" name="Science">
        <title>The dynamics and time scale of ongoing genomic erosion in symbiotic bacteria.</title>
        <authorList>
            <person name="Moran N.A."/>
            <person name="McLaughlin H.J."/>
            <person name="Sorek R."/>
        </authorList>
    </citation>
    <scope>NUCLEOTIDE SEQUENCE [LARGE SCALE GENOMIC DNA]</scope>
    <source>
        <strain>5A</strain>
    </source>
</reference>
<gene>
    <name evidence="1" type="primary">nuoC</name>
    <name evidence="1" type="synonym">nuoCD</name>
    <name evidence="1" type="synonym">nuoD</name>
    <name type="ordered locus">BUAP5A_154</name>
</gene>
<proteinExistence type="inferred from homology"/>
<sequence>MIDLMPKKNTFLLKKKYKEDSNNSVINNLFDFFGKEFCFHQITLTGFPIIWIDKTLLIEVGKFLYHLSQPYIMLYDLHGVDERIRLHREDLPKADFSVFYHLISIERNSDIMIKVPLLENDLILPTFTGLFPNANWYERETWDMFGIIFNNHPNLTRIIMPSTWKGHPLRKNYSARATEYEPFFLNEQKEDLEMEGLKFKPELWGMKRKNDNVEFMFLNLGPNHPSAHGAFRIVLQLDGENIVDCVPDIGYHHRGAEKMAERQSWHSYIPYTDRIEYLGGCVNELPYVLAVEKLANISVPEKAEVIRVMMSELFRINSHLLYISTFIQDVGCMTPVFFAFTDRQKIYDLIEAITGARMHPAWFRIGGVANDLPQGWNILLKEFLDWMPKRLKYYINTALKNSILIHRSKGIAEYNKKEALQWGVTGAGLRATGLNFDVRKWRPYSGYQNYTFEVPVGSGISDCYSRVMIKVEEIYQSLFILKQCLCNMPSGPFKSEDSLTTPPSKECVFQNIETMITHFLQVSWGPVIPENESFQMIEATKGINSYYLISDGGTMSYRTRIRTPSFPHLQQIPSVIRGSLISDLIVYLGSIDFVMSDVDR</sequence>
<name>NUOCD_BUCA5</name>
<feature type="chain" id="PRO_1000166677" description="NADH-quinone oxidoreductase subunit C/D">
    <location>
        <begin position="1"/>
        <end position="600"/>
    </location>
</feature>
<feature type="region of interest" description="NADH dehydrogenase I subunit C" evidence="1">
    <location>
        <begin position="1"/>
        <end position="190"/>
    </location>
</feature>
<feature type="region of interest" description="NADH dehydrogenase I subunit D" evidence="1">
    <location>
        <begin position="214"/>
        <end position="600"/>
    </location>
</feature>
<dbReference type="EC" id="7.1.1.-" evidence="1"/>
<dbReference type="EMBL" id="CP001161">
    <property type="protein sequence ID" value="ACL30529.1"/>
    <property type="molecule type" value="Genomic_DNA"/>
</dbReference>
<dbReference type="RefSeq" id="WP_009874112.1">
    <property type="nucleotide sequence ID" value="NC_011833.1"/>
</dbReference>
<dbReference type="SMR" id="B8D8V7"/>
<dbReference type="KEGG" id="bap:BUAP5A_154"/>
<dbReference type="HOGENOM" id="CLU_015134_3_2_6"/>
<dbReference type="OrthoDB" id="9801496at2"/>
<dbReference type="Proteomes" id="UP000006904">
    <property type="component" value="Chromosome"/>
</dbReference>
<dbReference type="GO" id="GO:0030964">
    <property type="term" value="C:NADH dehydrogenase complex"/>
    <property type="evidence" value="ECO:0007669"/>
    <property type="project" value="InterPro"/>
</dbReference>
<dbReference type="GO" id="GO:0005886">
    <property type="term" value="C:plasma membrane"/>
    <property type="evidence" value="ECO:0007669"/>
    <property type="project" value="UniProtKB-SubCell"/>
</dbReference>
<dbReference type="GO" id="GO:0051287">
    <property type="term" value="F:NAD binding"/>
    <property type="evidence" value="ECO:0007669"/>
    <property type="project" value="InterPro"/>
</dbReference>
<dbReference type="GO" id="GO:0008137">
    <property type="term" value="F:NADH dehydrogenase (ubiquinone) activity"/>
    <property type="evidence" value="ECO:0007669"/>
    <property type="project" value="InterPro"/>
</dbReference>
<dbReference type="GO" id="GO:0050136">
    <property type="term" value="F:NADH:ubiquinone reductase (non-electrogenic) activity"/>
    <property type="evidence" value="ECO:0007669"/>
    <property type="project" value="UniProtKB-UniRule"/>
</dbReference>
<dbReference type="GO" id="GO:0048038">
    <property type="term" value="F:quinone binding"/>
    <property type="evidence" value="ECO:0007669"/>
    <property type="project" value="UniProtKB-KW"/>
</dbReference>
<dbReference type="FunFam" id="1.10.645.10:FF:000001">
    <property type="entry name" value="NADH-quinone oxidoreductase subunit C/D"/>
    <property type="match status" value="1"/>
</dbReference>
<dbReference type="Gene3D" id="1.10.645.10">
    <property type="entry name" value="Cytochrome-c3 Hydrogenase, chain B"/>
    <property type="match status" value="1"/>
</dbReference>
<dbReference type="Gene3D" id="3.30.460.80">
    <property type="entry name" value="NADH:ubiquinone oxidoreductase, 30kDa subunit"/>
    <property type="match status" value="1"/>
</dbReference>
<dbReference type="HAMAP" id="MF_01359">
    <property type="entry name" value="NDH1_NuoCD_1"/>
    <property type="match status" value="1"/>
</dbReference>
<dbReference type="HAMAP" id="MF_01358">
    <property type="entry name" value="NDH1_NuoD"/>
    <property type="match status" value="1"/>
</dbReference>
<dbReference type="InterPro" id="IPR010218">
    <property type="entry name" value="NADH_DH_suC"/>
</dbReference>
<dbReference type="InterPro" id="IPR023062">
    <property type="entry name" value="NADH_DH_suCD"/>
</dbReference>
<dbReference type="InterPro" id="IPR001135">
    <property type="entry name" value="NADH_Q_OxRdtase_suD"/>
</dbReference>
<dbReference type="InterPro" id="IPR037232">
    <property type="entry name" value="NADH_quin_OxRdtase_su_C/D-like"/>
</dbReference>
<dbReference type="InterPro" id="IPR001268">
    <property type="entry name" value="NADH_UbQ_OxRdtase_30kDa_su"/>
</dbReference>
<dbReference type="InterPro" id="IPR014029">
    <property type="entry name" value="NADH_UbQ_OxRdtase_49kDa_CS"/>
</dbReference>
<dbReference type="InterPro" id="IPR022885">
    <property type="entry name" value="NDH1_su_D/H"/>
</dbReference>
<dbReference type="InterPro" id="IPR029014">
    <property type="entry name" value="NiFe-Hase_large"/>
</dbReference>
<dbReference type="NCBIfam" id="TIGR01961">
    <property type="entry name" value="NuoC_fam"/>
    <property type="match status" value="1"/>
</dbReference>
<dbReference type="NCBIfam" id="TIGR01962">
    <property type="entry name" value="NuoD"/>
    <property type="match status" value="1"/>
</dbReference>
<dbReference type="NCBIfam" id="NF004739">
    <property type="entry name" value="PRK06075.1"/>
    <property type="match status" value="1"/>
</dbReference>
<dbReference type="NCBIfam" id="NF008728">
    <property type="entry name" value="PRK11742.1"/>
    <property type="match status" value="1"/>
</dbReference>
<dbReference type="PANTHER" id="PTHR11993:SF45">
    <property type="entry name" value="NADH-QUINONE OXIDOREDUCTASE SUBUNIT C_D"/>
    <property type="match status" value="1"/>
</dbReference>
<dbReference type="PANTHER" id="PTHR11993">
    <property type="entry name" value="NADH-UBIQUINONE OXIDOREDUCTASE 49 KDA SUBUNIT"/>
    <property type="match status" value="1"/>
</dbReference>
<dbReference type="Pfam" id="PF00329">
    <property type="entry name" value="Complex1_30kDa"/>
    <property type="match status" value="1"/>
</dbReference>
<dbReference type="Pfam" id="PF00346">
    <property type="entry name" value="Complex1_49kDa"/>
    <property type="match status" value="1"/>
</dbReference>
<dbReference type="SUPFAM" id="SSF56762">
    <property type="entry name" value="HydB/Nqo4-like"/>
    <property type="match status" value="1"/>
</dbReference>
<dbReference type="SUPFAM" id="SSF143243">
    <property type="entry name" value="Nqo5-like"/>
    <property type="match status" value="1"/>
</dbReference>
<dbReference type="PROSITE" id="PS00535">
    <property type="entry name" value="COMPLEX1_49K"/>
    <property type="match status" value="1"/>
</dbReference>
<keyword id="KW-1003">Cell membrane</keyword>
<keyword id="KW-0472">Membrane</keyword>
<keyword id="KW-0511">Multifunctional enzyme</keyword>
<keyword id="KW-0520">NAD</keyword>
<keyword id="KW-0874">Quinone</keyword>
<keyword id="KW-1278">Translocase</keyword>
<keyword id="KW-0813">Transport</keyword>
<keyword id="KW-0830">Ubiquinone</keyword>
<organism>
    <name type="scientific">Buchnera aphidicola subsp. Acyrthosiphon pisum (strain 5A)</name>
    <dbReference type="NCBI Taxonomy" id="563178"/>
    <lineage>
        <taxon>Bacteria</taxon>
        <taxon>Pseudomonadati</taxon>
        <taxon>Pseudomonadota</taxon>
        <taxon>Gammaproteobacteria</taxon>
        <taxon>Enterobacterales</taxon>
        <taxon>Erwiniaceae</taxon>
        <taxon>Buchnera</taxon>
    </lineage>
</organism>